<dbReference type="EMBL" id="BX950229">
    <property type="protein sequence ID" value="CAF29597.1"/>
    <property type="molecule type" value="Genomic_DNA"/>
</dbReference>
<dbReference type="RefSeq" id="WP_011169985.1">
    <property type="nucleotide sequence ID" value="NC_005791.1"/>
</dbReference>
<dbReference type="SMR" id="Q6M176"/>
<dbReference type="STRING" id="267377.MMP0041"/>
<dbReference type="EnsemblBacteria" id="CAF29597">
    <property type="protein sequence ID" value="CAF29597"/>
    <property type="gene ID" value="MMP0041"/>
</dbReference>
<dbReference type="GeneID" id="2761541"/>
<dbReference type="KEGG" id="mmp:MMP0041"/>
<dbReference type="PATRIC" id="fig|267377.15.peg.42"/>
<dbReference type="eggNOG" id="arCOG01981">
    <property type="taxonomic scope" value="Archaea"/>
</dbReference>
<dbReference type="HOGENOM" id="CLU_043736_0_1_2"/>
<dbReference type="OrthoDB" id="7429at2157"/>
<dbReference type="Proteomes" id="UP000000590">
    <property type="component" value="Chromosome"/>
</dbReference>
<dbReference type="GO" id="GO:0097550">
    <property type="term" value="C:transcription preinitiation complex"/>
    <property type="evidence" value="ECO:0007669"/>
    <property type="project" value="TreeGrafter"/>
</dbReference>
<dbReference type="GO" id="GO:0003700">
    <property type="term" value="F:DNA-binding transcription factor activity"/>
    <property type="evidence" value="ECO:0007669"/>
    <property type="project" value="UniProtKB-UniRule"/>
</dbReference>
<dbReference type="GO" id="GO:0017025">
    <property type="term" value="F:TBP-class protein binding"/>
    <property type="evidence" value="ECO:0007669"/>
    <property type="project" value="InterPro"/>
</dbReference>
<dbReference type="GO" id="GO:0008270">
    <property type="term" value="F:zinc ion binding"/>
    <property type="evidence" value="ECO:0007669"/>
    <property type="project" value="UniProtKB-UniRule"/>
</dbReference>
<dbReference type="GO" id="GO:0070897">
    <property type="term" value="P:transcription preinitiation complex assembly"/>
    <property type="evidence" value="ECO:0007669"/>
    <property type="project" value="InterPro"/>
</dbReference>
<dbReference type="CDD" id="cd20549">
    <property type="entry name" value="CYCLIN_TFIIB_archaea_like_rpt1"/>
    <property type="match status" value="1"/>
</dbReference>
<dbReference type="CDD" id="cd20550">
    <property type="entry name" value="CYCLIN_TFIIB_archaea_like_rpt2"/>
    <property type="match status" value="1"/>
</dbReference>
<dbReference type="FunFam" id="1.10.472.10:FF:000023">
    <property type="entry name" value="Transcription initiation factor IIB"/>
    <property type="match status" value="1"/>
</dbReference>
<dbReference type="FunFam" id="1.10.472.170:FF:000001">
    <property type="entry name" value="Transcription initiation factor IIB"/>
    <property type="match status" value="1"/>
</dbReference>
<dbReference type="FunFam" id="2.20.25.10:FF:000037">
    <property type="entry name" value="Transcription initiation factor IIB"/>
    <property type="match status" value="1"/>
</dbReference>
<dbReference type="Gene3D" id="1.10.472.170">
    <property type="match status" value="1"/>
</dbReference>
<dbReference type="Gene3D" id="1.10.472.10">
    <property type="entry name" value="Cyclin-like"/>
    <property type="match status" value="1"/>
</dbReference>
<dbReference type="HAMAP" id="MF_00383">
    <property type="entry name" value="TF2B_arch"/>
    <property type="match status" value="1"/>
</dbReference>
<dbReference type="InterPro" id="IPR013763">
    <property type="entry name" value="Cyclin-like_dom"/>
</dbReference>
<dbReference type="InterPro" id="IPR036915">
    <property type="entry name" value="Cyclin-like_sf"/>
</dbReference>
<dbReference type="InterPro" id="IPR000812">
    <property type="entry name" value="TFIIB"/>
</dbReference>
<dbReference type="InterPro" id="IPR023484">
    <property type="entry name" value="TFIIB_arc"/>
</dbReference>
<dbReference type="InterPro" id="IPR023486">
    <property type="entry name" value="TFIIB_CS"/>
</dbReference>
<dbReference type="InterPro" id="IPR013150">
    <property type="entry name" value="TFIIB_cyclin"/>
</dbReference>
<dbReference type="InterPro" id="IPR013137">
    <property type="entry name" value="Znf_TFIIB"/>
</dbReference>
<dbReference type="NCBIfam" id="NF001658">
    <property type="entry name" value="PRK00423.1"/>
    <property type="match status" value="1"/>
</dbReference>
<dbReference type="PANTHER" id="PTHR11618:SF13">
    <property type="entry name" value="TRANSCRIPTION INITIATION FACTOR IIB"/>
    <property type="match status" value="1"/>
</dbReference>
<dbReference type="PANTHER" id="PTHR11618">
    <property type="entry name" value="TRANSCRIPTION INITIATION FACTOR IIB-RELATED"/>
    <property type="match status" value="1"/>
</dbReference>
<dbReference type="Pfam" id="PF00382">
    <property type="entry name" value="TFIIB"/>
    <property type="match status" value="2"/>
</dbReference>
<dbReference type="Pfam" id="PF08271">
    <property type="entry name" value="Zn_Ribbon_TF"/>
    <property type="match status" value="1"/>
</dbReference>
<dbReference type="PRINTS" id="PR00685">
    <property type="entry name" value="TIFACTORIIB"/>
</dbReference>
<dbReference type="SMART" id="SM00385">
    <property type="entry name" value="CYCLIN"/>
    <property type="match status" value="2"/>
</dbReference>
<dbReference type="SUPFAM" id="SSF47954">
    <property type="entry name" value="Cyclin-like"/>
    <property type="match status" value="2"/>
</dbReference>
<dbReference type="SUPFAM" id="SSF57783">
    <property type="entry name" value="Zinc beta-ribbon"/>
    <property type="match status" value="1"/>
</dbReference>
<dbReference type="PROSITE" id="PS00782">
    <property type="entry name" value="TFIIB"/>
    <property type="match status" value="2"/>
</dbReference>
<dbReference type="PROSITE" id="PS51134">
    <property type="entry name" value="ZF_TFIIB"/>
    <property type="match status" value="1"/>
</dbReference>
<organism>
    <name type="scientific">Methanococcus maripaludis (strain DSM 14266 / JCM 13030 / NBRC 101832 / S2 / LL)</name>
    <dbReference type="NCBI Taxonomy" id="267377"/>
    <lineage>
        <taxon>Archaea</taxon>
        <taxon>Methanobacteriati</taxon>
        <taxon>Methanobacteriota</taxon>
        <taxon>Methanomada group</taxon>
        <taxon>Methanococci</taxon>
        <taxon>Methanococcales</taxon>
        <taxon>Methanococcaceae</taxon>
        <taxon>Methanococcus</taxon>
    </lineage>
</organism>
<keyword id="KW-0479">Metal-binding</keyword>
<keyword id="KW-1185">Reference proteome</keyword>
<keyword id="KW-0677">Repeat</keyword>
<keyword id="KW-0804">Transcription</keyword>
<keyword id="KW-0805">Transcription regulation</keyword>
<keyword id="KW-0862">Zinc</keyword>
<keyword id="KW-0863">Zinc-finger</keyword>
<protein>
    <recommendedName>
        <fullName evidence="1">Transcription initiation factor IIB</fullName>
        <shortName evidence="1">TFIIB</shortName>
    </recommendedName>
</protein>
<accession>Q6M176</accession>
<evidence type="ECO:0000255" key="1">
    <source>
        <dbReference type="HAMAP-Rule" id="MF_00383"/>
    </source>
</evidence>
<evidence type="ECO:0000255" key="2">
    <source>
        <dbReference type="PROSITE-ProRule" id="PRU00469"/>
    </source>
</evidence>
<comment type="function">
    <text evidence="1">Stabilizes TBP binding to an archaeal box-A promoter. Also responsible for recruiting RNA polymerase II to the pre-initiation complex (DNA-TBP-TFIIB).</text>
</comment>
<comment type="similarity">
    <text evidence="1">Belongs to the TFIIB family.</text>
</comment>
<sequence length="339" mass="38206">MKVESVTKEDTKKSERKIKIAIAKPEDYSNKNVILEKEEELICPVCGSKSIIKDYERAEIVCEMCGCVLQQNLFDVGPEWRAFDHEQRVKRSRVGAPMTYTIHDKGLSTVIDWRNKDSYGKDISADKRAQLYRLRKWQRRIRVSDASERNLAFALSELDRIASKLGLPRNVRENAAVLYRGAVEKGLIRGRSIEGVAAAALYAACRRCKVPRTLDEIAEVSRVDRKEIGRTYRFISRELNIRLAPTNPVDYVPRFASELKLPGEVESKAISILQKAGERGLTSGRGPTGVAAAAIYIASVLQGTRRTQREVADVAGVTEVTIRNRYKELTEHLDIDVTL</sequence>
<feature type="chain" id="PRO_1000080111" description="Transcription initiation factor IIB">
    <location>
        <begin position="1"/>
        <end position="339"/>
    </location>
</feature>
<feature type="repeat" description="1">
    <location>
        <begin position="156"/>
        <end position="239"/>
    </location>
</feature>
<feature type="repeat" description="2">
    <location>
        <begin position="250"/>
        <end position="331"/>
    </location>
</feature>
<feature type="zinc finger region" description="TFIIB-type" evidence="2">
    <location>
        <begin position="39"/>
        <end position="70"/>
    </location>
</feature>
<feature type="binding site" evidence="2">
    <location>
        <position position="43"/>
    </location>
    <ligand>
        <name>Zn(2+)</name>
        <dbReference type="ChEBI" id="CHEBI:29105"/>
    </ligand>
</feature>
<feature type="binding site" evidence="2">
    <location>
        <position position="46"/>
    </location>
    <ligand>
        <name>Zn(2+)</name>
        <dbReference type="ChEBI" id="CHEBI:29105"/>
    </ligand>
</feature>
<feature type="binding site" evidence="2">
    <location>
        <position position="62"/>
    </location>
    <ligand>
        <name>Zn(2+)</name>
        <dbReference type="ChEBI" id="CHEBI:29105"/>
    </ligand>
</feature>
<feature type="binding site" evidence="2">
    <location>
        <position position="65"/>
    </location>
    <ligand>
        <name>Zn(2+)</name>
        <dbReference type="ChEBI" id="CHEBI:29105"/>
    </ligand>
</feature>
<gene>
    <name evidence="1" type="primary">tfb</name>
    <name type="ordered locus">MMP0041</name>
</gene>
<reference key="1">
    <citation type="journal article" date="2004" name="J. Bacteriol.">
        <title>Complete genome sequence of the genetically tractable hydrogenotrophic methanogen Methanococcus maripaludis.</title>
        <authorList>
            <person name="Hendrickson E.L."/>
            <person name="Kaul R."/>
            <person name="Zhou Y."/>
            <person name="Bovee D."/>
            <person name="Chapman P."/>
            <person name="Chung J."/>
            <person name="Conway de Macario E."/>
            <person name="Dodsworth J.A."/>
            <person name="Gillett W."/>
            <person name="Graham D.E."/>
            <person name="Hackett M."/>
            <person name="Haydock A.K."/>
            <person name="Kang A."/>
            <person name="Land M.L."/>
            <person name="Levy R."/>
            <person name="Lie T.J."/>
            <person name="Major T.A."/>
            <person name="Moore B.C."/>
            <person name="Porat I."/>
            <person name="Palmeiri A."/>
            <person name="Rouse G."/>
            <person name="Saenphimmachak C."/>
            <person name="Soell D."/>
            <person name="Van Dien S."/>
            <person name="Wang T."/>
            <person name="Whitman W.B."/>
            <person name="Xia Q."/>
            <person name="Zhang Y."/>
            <person name="Larimer F.W."/>
            <person name="Olson M.V."/>
            <person name="Leigh J.A."/>
        </authorList>
    </citation>
    <scope>NUCLEOTIDE SEQUENCE [LARGE SCALE GENOMIC DNA]</scope>
    <source>
        <strain>DSM 14266 / JCM 13030 / NBRC 101832 / S2 / LL</strain>
    </source>
</reference>
<name>TF2B_METMP</name>
<proteinExistence type="inferred from homology"/>